<dbReference type="EMBL" id="AL123456">
    <property type="protein sequence ID" value="CCP44989.1"/>
    <property type="molecule type" value="Genomic_DNA"/>
</dbReference>
<dbReference type="PIR" id="E70786">
    <property type="entry name" value="E70786"/>
</dbReference>
<dbReference type="RefSeq" id="NP_216728.1">
    <property type="nucleotide sequence ID" value="NC_000962.3"/>
</dbReference>
<dbReference type="RefSeq" id="WP_003411442.1">
    <property type="nucleotide sequence ID" value="NZ_NVQJ01000008.1"/>
</dbReference>
<dbReference type="SMR" id="P9WMU7"/>
<dbReference type="STRING" id="83332.Rv2212"/>
<dbReference type="PaxDb" id="83332-Rv2212"/>
<dbReference type="DNASU" id="887979"/>
<dbReference type="GeneID" id="887979"/>
<dbReference type="KEGG" id="mtu:Rv2212"/>
<dbReference type="KEGG" id="mtv:RVBD_2212"/>
<dbReference type="TubercuList" id="Rv2212"/>
<dbReference type="eggNOG" id="COG2114">
    <property type="taxonomic scope" value="Bacteria"/>
</dbReference>
<dbReference type="InParanoid" id="P9WMU7"/>
<dbReference type="OrthoDB" id="310836at2"/>
<dbReference type="PhylomeDB" id="P9WMU7"/>
<dbReference type="BRENDA" id="4.6.1.1">
    <property type="organism ID" value="3445"/>
</dbReference>
<dbReference type="PHI-base" id="PHI:7045"/>
<dbReference type="Proteomes" id="UP000001584">
    <property type="component" value="Chromosome"/>
</dbReference>
<dbReference type="GO" id="GO:0004016">
    <property type="term" value="F:adenylate cyclase activity"/>
    <property type="evidence" value="ECO:0000314"/>
    <property type="project" value="MTBBASE"/>
</dbReference>
<dbReference type="GO" id="GO:0005504">
    <property type="term" value="F:fatty acid binding"/>
    <property type="evidence" value="ECO:0000314"/>
    <property type="project" value="MTBBASE"/>
</dbReference>
<dbReference type="GO" id="GO:0006171">
    <property type="term" value="P:cAMP biosynthetic process"/>
    <property type="evidence" value="ECO:0000314"/>
    <property type="project" value="MTBBASE"/>
</dbReference>
<dbReference type="GO" id="GO:0035556">
    <property type="term" value="P:intracellular signal transduction"/>
    <property type="evidence" value="ECO:0007669"/>
    <property type="project" value="InterPro"/>
</dbReference>
<dbReference type="CDD" id="cd07302">
    <property type="entry name" value="CHD"/>
    <property type="match status" value="1"/>
</dbReference>
<dbReference type="Gene3D" id="3.30.70.1230">
    <property type="entry name" value="Nucleotide cyclase"/>
    <property type="match status" value="1"/>
</dbReference>
<dbReference type="InterPro" id="IPR001054">
    <property type="entry name" value="A/G_cyclase"/>
</dbReference>
<dbReference type="InterPro" id="IPR050697">
    <property type="entry name" value="Adenylyl/Guanylyl_Cyclase_3/4"/>
</dbReference>
<dbReference type="InterPro" id="IPR029787">
    <property type="entry name" value="Nucleotide_cyclase"/>
</dbReference>
<dbReference type="PANTHER" id="PTHR43081:SF1">
    <property type="entry name" value="ADENYLATE CYCLASE, TERMINAL-DIFFERENTIATION SPECIFIC"/>
    <property type="match status" value="1"/>
</dbReference>
<dbReference type="PANTHER" id="PTHR43081">
    <property type="entry name" value="ADENYLATE CYCLASE, TERMINAL-DIFFERENTIATION SPECIFIC-RELATED"/>
    <property type="match status" value="1"/>
</dbReference>
<dbReference type="Pfam" id="PF00211">
    <property type="entry name" value="Guanylate_cyc"/>
    <property type="match status" value="1"/>
</dbReference>
<dbReference type="SMART" id="SM00044">
    <property type="entry name" value="CYCc"/>
    <property type="match status" value="1"/>
</dbReference>
<dbReference type="SUPFAM" id="SSF55073">
    <property type="entry name" value="Nucleotide cyclase"/>
    <property type="match status" value="1"/>
</dbReference>
<dbReference type="PROSITE" id="PS50125">
    <property type="entry name" value="GUANYLATE_CYCLASE_2"/>
    <property type="match status" value="1"/>
</dbReference>
<keyword id="KW-1185">Reference proteome</keyword>
<name>Y2212_MYCTU</name>
<gene>
    <name type="ordered locus">Rv2212</name>
    <name type="ORF">MTCY190.23</name>
</gene>
<proteinExistence type="evidence at protein level"/>
<organism>
    <name type="scientific">Mycobacterium tuberculosis (strain ATCC 25618 / H37Rv)</name>
    <dbReference type="NCBI Taxonomy" id="83332"/>
    <lineage>
        <taxon>Bacteria</taxon>
        <taxon>Bacillati</taxon>
        <taxon>Actinomycetota</taxon>
        <taxon>Actinomycetes</taxon>
        <taxon>Mycobacteriales</taxon>
        <taxon>Mycobacteriaceae</taxon>
        <taxon>Mycobacterium</taxon>
        <taxon>Mycobacterium tuberculosis complex</taxon>
    </lineage>
</organism>
<comment type="similarity">
    <text evidence="1">Belongs to the adenylyl cyclase class-4/guanylyl cyclase family.</text>
</comment>
<feature type="chain" id="PRO_0000074132" description="Uncharacterized protein Rv2212">
    <location>
        <begin position="1"/>
        <end position="378"/>
    </location>
</feature>
<feature type="domain" description="Guanylate cyclase" evidence="1">
    <location>
        <begin position="208"/>
        <end position="317"/>
    </location>
</feature>
<evidence type="ECO:0000255" key="1">
    <source>
        <dbReference type="PROSITE-ProRule" id="PRU00099"/>
    </source>
</evidence>
<sequence>MYDSLDFDALEAAGIANPRERAGLLTYLDELGFTVEEMVQAERRGRLFGLAGDVLLWSGPPIYTLATAADELGLSADDVARAWSLLGLTVAGPDVPTLSQADVDALATWVALKALVGEDGAFGLLRVLGTAMARLAEAESTMIRAGSPNIQMTHTHDELATARAYRAAAEFVPRIGALIDTVHRHHLASARTYFEGVIGDTSASVTCGIGFADLSSFTALTQALTPAQLQDLLTEFDAAVTDVVHADGGRLVKFIGDAVMWVSSSPERLVRAAVDLVDHPGARAAELQVRAGLAYGTVLALNGDYFGNPVNLAARLVAAAAPGQILAAAQLRDMLPDWPALAHGPLTLKGFDAPVMAFELHDNPRARDADTPSPAASD</sequence>
<accession>P9WMU7</accession>
<accession>L0T8Y3</accession>
<accession>P64265</accession>
<accession>Q10400</accession>
<protein>
    <recommendedName>
        <fullName>Uncharacterized protein Rv2212</fullName>
    </recommendedName>
</protein>
<reference key="1">
    <citation type="journal article" date="1998" name="Nature">
        <title>Deciphering the biology of Mycobacterium tuberculosis from the complete genome sequence.</title>
        <authorList>
            <person name="Cole S.T."/>
            <person name="Brosch R."/>
            <person name="Parkhill J."/>
            <person name="Garnier T."/>
            <person name="Churcher C.M."/>
            <person name="Harris D.E."/>
            <person name="Gordon S.V."/>
            <person name="Eiglmeier K."/>
            <person name="Gas S."/>
            <person name="Barry C.E. III"/>
            <person name="Tekaia F."/>
            <person name="Badcock K."/>
            <person name="Basham D."/>
            <person name="Brown D."/>
            <person name="Chillingworth T."/>
            <person name="Connor R."/>
            <person name="Davies R.M."/>
            <person name="Devlin K."/>
            <person name="Feltwell T."/>
            <person name="Gentles S."/>
            <person name="Hamlin N."/>
            <person name="Holroyd S."/>
            <person name="Hornsby T."/>
            <person name="Jagels K."/>
            <person name="Krogh A."/>
            <person name="McLean J."/>
            <person name="Moule S."/>
            <person name="Murphy L.D."/>
            <person name="Oliver S."/>
            <person name="Osborne J."/>
            <person name="Quail M.A."/>
            <person name="Rajandream M.A."/>
            <person name="Rogers J."/>
            <person name="Rutter S."/>
            <person name="Seeger K."/>
            <person name="Skelton S."/>
            <person name="Squares S."/>
            <person name="Squares R."/>
            <person name="Sulston J.E."/>
            <person name="Taylor K."/>
            <person name="Whitehead S."/>
            <person name="Barrell B.G."/>
        </authorList>
    </citation>
    <scope>NUCLEOTIDE SEQUENCE [LARGE SCALE GENOMIC DNA]</scope>
    <source>
        <strain>ATCC 25618 / H37Rv</strain>
    </source>
</reference>
<reference key="2">
    <citation type="journal article" date="2011" name="Mol. Cell. Proteomics">
        <title>Proteogenomic analysis of Mycobacterium tuberculosis by high resolution mass spectrometry.</title>
        <authorList>
            <person name="Kelkar D.S."/>
            <person name="Kumar D."/>
            <person name="Kumar P."/>
            <person name="Balakrishnan L."/>
            <person name="Muthusamy B."/>
            <person name="Yadav A.K."/>
            <person name="Shrivastava P."/>
            <person name="Marimuthu A."/>
            <person name="Anand S."/>
            <person name="Sundaram H."/>
            <person name="Kingsbury R."/>
            <person name="Harsha H.C."/>
            <person name="Nair B."/>
            <person name="Prasad T.S."/>
            <person name="Chauhan D.S."/>
            <person name="Katoch K."/>
            <person name="Katoch V.M."/>
            <person name="Kumar P."/>
            <person name="Chaerkady R."/>
            <person name="Ramachandran S."/>
            <person name="Dash D."/>
            <person name="Pandey A."/>
        </authorList>
    </citation>
    <scope>IDENTIFICATION BY MASS SPECTROMETRY [LARGE SCALE ANALYSIS]</scope>
    <source>
        <strain>ATCC 25618 / H37Rv</strain>
    </source>
</reference>